<evidence type="ECO:0000255" key="1"/>
<evidence type="ECO:0000256" key="2">
    <source>
        <dbReference type="SAM" id="MobiDB-lite"/>
    </source>
</evidence>
<evidence type="ECO:0000305" key="3"/>
<dbReference type="EMBL" id="BC110417">
    <property type="protein sequence ID" value="AAI10418.1"/>
    <property type="molecule type" value="mRNA"/>
</dbReference>
<dbReference type="SMR" id="Q0D2H9"/>
<dbReference type="FunCoup" id="Q0D2H9">
    <property type="interactions" value="30"/>
</dbReference>
<dbReference type="IntAct" id="Q0D2H9">
    <property type="interactions" value="24"/>
</dbReference>
<dbReference type="BioMuta" id="HGNC:32376"/>
<dbReference type="DMDM" id="121940175"/>
<dbReference type="jPOST" id="Q0D2H9"/>
<dbReference type="MassIVE" id="Q0D2H9"/>
<dbReference type="PeptideAtlas" id="Q0D2H9"/>
<dbReference type="AGR" id="HGNC:32376"/>
<dbReference type="GeneCards" id="GOLGA8DP"/>
<dbReference type="HGNC" id="HGNC:32376">
    <property type="gene designation" value="GOLGA8DP"/>
</dbReference>
<dbReference type="neXtProt" id="NX_Q0D2H9"/>
<dbReference type="InParanoid" id="Q0D2H9"/>
<dbReference type="PAN-GO" id="Q0D2H9">
    <property type="GO annotations" value="4 GO annotations based on evolutionary models"/>
</dbReference>
<dbReference type="PhylomeDB" id="Q0D2H9"/>
<dbReference type="PathwayCommons" id="Q0D2H9"/>
<dbReference type="SignaLink" id="Q0D2H9"/>
<dbReference type="Pharos" id="Q0D2H9">
    <property type="development level" value="Tdark"/>
</dbReference>
<dbReference type="Proteomes" id="UP000005640">
    <property type="component" value="Unplaced"/>
</dbReference>
<dbReference type="RNAct" id="Q0D2H9">
    <property type="molecule type" value="protein"/>
</dbReference>
<dbReference type="GO" id="GO:0005801">
    <property type="term" value="C:cis-Golgi network"/>
    <property type="evidence" value="ECO:0000318"/>
    <property type="project" value="GO_Central"/>
</dbReference>
<dbReference type="GO" id="GO:0000137">
    <property type="term" value="C:Golgi cis cisterna"/>
    <property type="evidence" value="ECO:0000318"/>
    <property type="project" value="GO_Central"/>
</dbReference>
<dbReference type="GO" id="GO:0032580">
    <property type="term" value="C:Golgi cisterna membrane"/>
    <property type="evidence" value="ECO:0000318"/>
    <property type="project" value="GO_Central"/>
</dbReference>
<dbReference type="GO" id="GO:0007030">
    <property type="term" value="P:Golgi organization"/>
    <property type="evidence" value="ECO:0000318"/>
    <property type="project" value="GO_Central"/>
</dbReference>
<dbReference type="InterPro" id="IPR043937">
    <property type="entry name" value="GM130_C"/>
</dbReference>
<dbReference type="InterPro" id="IPR043976">
    <property type="entry name" value="GOLGA_cons_dom"/>
</dbReference>
<dbReference type="InterPro" id="IPR024858">
    <property type="entry name" value="Golgin_A"/>
</dbReference>
<dbReference type="PANTHER" id="PTHR10881:SF7">
    <property type="entry name" value="GOLGIN SUBFAMILY A MEMBER 8C-RELATED"/>
    <property type="match status" value="1"/>
</dbReference>
<dbReference type="PANTHER" id="PTHR10881">
    <property type="entry name" value="GOLGIN SUBFAMILY A MEMBER-RELATED"/>
    <property type="match status" value="1"/>
</dbReference>
<dbReference type="Pfam" id="PF19046">
    <property type="entry name" value="GM130_C"/>
    <property type="match status" value="1"/>
</dbReference>
<dbReference type="Pfam" id="PF15070">
    <property type="entry name" value="GOLGA2L5"/>
    <property type="match status" value="2"/>
</dbReference>
<reference key="1">
    <citation type="journal article" date="2004" name="Genome Res.">
        <title>The status, quality, and expansion of the NIH full-length cDNA project: the Mammalian Gene Collection (MGC).</title>
        <authorList>
            <consortium name="The MGC Project Team"/>
        </authorList>
    </citation>
    <scope>NUCLEOTIDE SEQUENCE [LARGE SCALE MRNA]</scope>
    <source>
        <tissue>Brain</tissue>
    </source>
</reference>
<proteinExistence type="uncertain"/>
<accession>Q0D2H9</accession>
<gene>
    <name type="primary">GOLGA8DP</name>
    <name type="synonym">GOLGA8D</name>
</gene>
<keyword id="KW-0175">Coiled coil</keyword>
<keyword id="KW-1185">Reference proteome</keyword>
<protein>
    <recommendedName>
        <fullName>Putative golgin subfamily A member 8D</fullName>
    </recommendedName>
</protein>
<organism>
    <name type="scientific">Homo sapiens</name>
    <name type="common">Human</name>
    <dbReference type="NCBI Taxonomy" id="9606"/>
    <lineage>
        <taxon>Eukaryota</taxon>
        <taxon>Metazoa</taxon>
        <taxon>Chordata</taxon>
        <taxon>Craniata</taxon>
        <taxon>Vertebrata</taxon>
        <taxon>Euteleostomi</taxon>
        <taxon>Mammalia</taxon>
        <taxon>Eutheria</taxon>
        <taxon>Euarchontoglires</taxon>
        <taxon>Primates</taxon>
        <taxon>Haplorrhini</taxon>
        <taxon>Catarrhini</taxon>
        <taxon>Hominidae</taxon>
        <taxon>Homo</taxon>
    </lineage>
</organism>
<sequence length="430" mass="48423">MEWKLEQSMREQALLKAQLTQLKESLKEVQLERDEYAEHLKGERARWQQRMRKMSQEVCSLKKEKKHDKYRVEKLERSLSKLKNQMAEPLPPEPPAVPSEVELQHLRKELERVAGALQAQVEYNQRISLLNEGQKERLREQEERLQEQQERLPEQEERLQQLAEPQNSFKELNNENKSVLQLEQQVKELQEKLGKERLEAASQQKQQLTAQLSLMALPGEGHGGEHLDSEGEEAPRPMPSVPEDLESREAMSGFMDHLEEKADLSELVEKEELGFFQYYRERCHQKVYHPITKPGGSAKDAAPGGGHHQAGPGQGGDEGEAAGAAGDGVAAGGDYKGHSKFLVTAQNPAHEPSPGAPAPQELGAAHKHGDLCEVSLTDSVEPVQGEAREGSPHDNPTAQPIVQDHQEHPGLGSNCCVPFFCWAWLPRRRR</sequence>
<name>GOG8D_HUMAN</name>
<feature type="chain" id="PRO_0000314966" description="Putative golgin subfamily A member 8D">
    <location>
        <begin position="1"/>
        <end position="430"/>
    </location>
</feature>
<feature type="region of interest" description="Disordered" evidence="2">
    <location>
        <begin position="138"/>
        <end position="158"/>
    </location>
</feature>
<feature type="region of interest" description="Disordered" evidence="2">
    <location>
        <begin position="217"/>
        <end position="239"/>
    </location>
</feature>
<feature type="region of interest" description="Disordered" evidence="2">
    <location>
        <begin position="290"/>
        <end position="331"/>
    </location>
</feature>
<feature type="region of interest" description="Disordered" evidence="2">
    <location>
        <begin position="382"/>
        <end position="406"/>
    </location>
</feature>
<feature type="coiled-coil region" evidence="1">
    <location>
        <begin position="2"/>
        <end position="217"/>
    </location>
</feature>
<feature type="compositionally biased region" description="Basic and acidic residues" evidence="2">
    <location>
        <begin position="222"/>
        <end position="235"/>
    </location>
</feature>
<feature type="compositionally biased region" description="Gly residues" evidence="2">
    <location>
        <begin position="303"/>
        <end position="316"/>
    </location>
</feature>
<comment type="interaction">
    <interactant intactId="EBI-10181276">
        <id>Q0D2H9</id>
    </interactant>
    <interactant intactId="EBI-10173507">
        <id>Q6UY14-3</id>
        <label>ADAMTSL4</label>
    </interactant>
    <organismsDiffer>false</organismsDiffer>
    <experiments>3</experiments>
</comment>
<comment type="interaction">
    <interactant intactId="EBI-10181276">
        <id>Q0D2H9</id>
    </interactant>
    <interactant intactId="EBI-492498">
        <id>P18848</id>
        <label>ATF4</label>
    </interactant>
    <organismsDiffer>false</organismsDiffer>
    <experiments>3</experiments>
</comment>
<comment type="interaction">
    <interactant intactId="EBI-10181276">
        <id>Q0D2H9</id>
    </interactant>
    <interactant intactId="EBI-8994378">
        <id>Q14032</id>
        <label>BAAT</label>
    </interactant>
    <organismsDiffer>false</organismsDiffer>
    <experiments>3</experiments>
</comment>
<comment type="interaction">
    <interactant intactId="EBI-10181276">
        <id>Q0D2H9</id>
    </interactant>
    <interactant intactId="EBI-741753">
        <id>Q00994</id>
        <label>BEX3</label>
    </interactant>
    <organismsDiffer>false</organismsDiffer>
    <experiments>3</experiments>
</comment>
<comment type="interaction">
    <interactant intactId="EBI-10181276">
        <id>Q0D2H9</id>
    </interactant>
    <interactant intactId="EBI-374880">
        <id>Q99459</id>
        <label>CDC5L</label>
    </interactant>
    <organismsDiffer>false</organismsDiffer>
    <experiments>3</experiments>
</comment>
<comment type="interaction">
    <interactant intactId="EBI-10181276">
        <id>Q0D2H9</id>
    </interactant>
    <interactant intactId="EBI-747776">
        <id>Q53EZ4</id>
        <label>CEP55</label>
    </interactant>
    <organismsDiffer>false</organismsDiffer>
    <experiments>3</experiments>
</comment>
<comment type="interaction">
    <interactant intactId="EBI-10181276">
        <id>Q0D2H9</id>
    </interactant>
    <interactant intactId="EBI-375576">
        <id>Q12929</id>
        <label>EPS8</label>
    </interactant>
    <organismsDiffer>false</organismsDiffer>
    <experiments>3</experiments>
</comment>
<comment type="interaction">
    <interactant intactId="EBI-10181276">
        <id>Q0D2H9</id>
    </interactant>
    <interactant intactId="EBI-4401517">
        <id>O14653</id>
        <label>GOSR2</label>
    </interactant>
    <organismsDiffer>false</organismsDiffer>
    <experiments>5</experiments>
</comment>
<comment type="interaction">
    <interactant intactId="EBI-10181276">
        <id>Q0D2H9</id>
    </interactant>
    <interactant intactId="EBI-750003">
        <id>Q8N4P3</id>
        <label>HDDC3</label>
    </interactant>
    <organismsDiffer>false</organismsDiffer>
    <experiments>3</experiments>
</comment>
<comment type="interaction">
    <interactant intactId="EBI-10181276">
        <id>Q0D2H9</id>
    </interactant>
    <interactant intactId="EBI-10183977">
        <id>V9HWG0</id>
        <label>HEL25</label>
    </interactant>
    <organismsDiffer>false</organismsDiffer>
    <experiments>3</experiments>
</comment>
<comment type="interaction">
    <interactant intactId="EBI-10181276">
        <id>Q0D2H9</id>
    </interactant>
    <interactant intactId="EBI-2511344">
        <id>Q8NC69</id>
        <label>KCTD6</label>
    </interactant>
    <organismsDiffer>false</organismsDiffer>
    <experiments>3</experiments>
</comment>
<comment type="interaction">
    <interactant intactId="EBI-10181276">
        <id>Q0D2H9</id>
    </interactant>
    <interactant intactId="EBI-10171552">
        <id>A1A4E9</id>
        <label>KRT13</label>
    </interactant>
    <organismsDiffer>false</organismsDiffer>
    <experiments>3</experiments>
</comment>
<comment type="interaction">
    <interactant intactId="EBI-10181276">
        <id>Q0D2H9</id>
    </interactant>
    <interactant intactId="EBI-10172150">
        <id>P60370</id>
        <label>KRTAP10-5</label>
    </interactant>
    <organismsDiffer>false</organismsDiffer>
    <experiments>3</experiments>
</comment>
<comment type="interaction">
    <interactant intactId="EBI-10181276">
        <id>Q0D2H9</id>
    </interactant>
    <interactant intactId="EBI-10172290">
        <id>P60409</id>
        <label>KRTAP10-7</label>
    </interactant>
    <organismsDiffer>false</organismsDiffer>
    <experiments>3</experiments>
</comment>
<comment type="interaction">
    <interactant intactId="EBI-10181276">
        <id>Q0D2H9</id>
    </interactant>
    <interactant intactId="EBI-10171774">
        <id>P60410</id>
        <label>KRTAP10-8</label>
    </interactant>
    <organismsDiffer>false</organismsDiffer>
    <experiments>3</experiments>
</comment>
<comment type="interaction">
    <interactant intactId="EBI-10181276">
        <id>Q0D2H9</id>
    </interactant>
    <interactant intactId="EBI-748397">
        <id>P50222</id>
        <label>MEOX2</label>
    </interactant>
    <organismsDiffer>false</organismsDiffer>
    <experiments>3</experiments>
</comment>
<comment type="interaction">
    <interactant intactId="EBI-10181276">
        <id>Q0D2H9</id>
    </interactant>
    <interactant intactId="EBI-372942">
        <id>Q13287</id>
        <label>NMI</label>
    </interactant>
    <organismsDiffer>false</organismsDiffer>
    <experiments>6</experiments>
</comment>
<comment type="interaction">
    <interactant intactId="EBI-10181276">
        <id>Q0D2H9</id>
    </interactant>
    <interactant intactId="EBI-1642831">
        <id>Q08499</id>
        <label>PDE4D</label>
    </interactant>
    <organismsDiffer>false</organismsDiffer>
    <experiments>3</experiments>
</comment>
<comment type="interaction">
    <interactant intactId="EBI-10181276">
        <id>Q0D2H9</id>
    </interactant>
    <interactant intactId="EBI-1105124">
        <id>Q5VU43</id>
        <label>PDE4DIP</label>
    </interactant>
    <organismsDiffer>false</organismsDiffer>
    <experiments>3</experiments>
</comment>
<comment type="interaction">
    <interactant intactId="EBI-10181276">
        <id>Q0D2H9</id>
    </interactant>
    <interactant intactId="EBI-413317">
        <id>Q96R06</id>
        <label>SPAG5</label>
    </interactant>
    <organismsDiffer>false</organismsDiffer>
    <experiments>3</experiments>
</comment>
<comment type="interaction">
    <interactant intactId="EBI-10181276">
        <id>Q0D2H9</id>
    </interactant>
    <interactant intactId="EBI-714135">
        <id>O75558</id>
        <label>STX11</label>
    </interactant>
    <organismsDiffer>false</organismsDiffer>
    <experiments>3</experiments>
</comment>
<comment type="interaction">
    <interactant intactId="EBI-10181276">
        <id>Q0D2H9</id>
    </interactant>
    <interactant intactId="EBI-533224">
        <id>P15884</id>
        <label>TCF4</label>
    </interactant>
    <organismsDiffer>false</organismsDiffer>
    <experiments>3</experiments>
</comment>
<comment type="interaction">
    <interactant intactId="EBI-10181276">
        <id>Q0D2H9</id>
    </interactant>
    <interactant intactId="EBI-739895">
        <id>Q8N6Y0</id>
        <label>USHBP1</label>
    </interactant>
    <organismsDiffer>false</organismsDiffer>
    <experiments>3</experiments>
</comment>
<comment type="similarity">
    <text evidence="3">Belongs to the GOLGA8 family.</text>
</comment>
<comment type="caution">
    <text evidence="3">Could be the product of a pseudogene. A family of highly similar proteins (GOLGA8A, GOLGA8B, GOLGA8C, GOLGA8D, GOLGA8E, GOLGA8F, GOLGA8G) are encoded by a repeated region on chromosome 15q11-15q13. Our sequences are in agreement with HGNC nomenclature.</text>
</comment>